<comment type="function">
    <text evidence="6 7">Component of the multi-pass translocon (MPT) complex that mediates insertion of multi-pass membrane proteins into the lipid bilayer of membranes (PubMed:32820719, PubMed:36261522). The MPT complex takes over after the SEC61 complex: following membrane insertion of the first few transmembrane segments of proteins by the SEC61 complex, the MPT complex occludes the lateral gate of the SEC61 complex to promote insertion of subsequent transmembrane regions (PubMed:36261522).</text>
</comment>
<comment type="subunit">
    <text evidence="5 6 7">Component of the back of Sec61 (BOS) complex, composed of NCLN/Nicalin, NOMO (NOMO1, NOMO2 or NOMO3) and TMEM147 (PubMed:20538592, PubMed:36261522). The BOS complex is part of the multi-pass translocon (MPT) complex, composed of three subcomplexes, the GEL complex (composed of RAB5IF/OPTI and TMCO1), the BOS complex (composed of NCLN/Nicalin, NOMO and TMEM147) and the PAT complex (composed of WDR83OS/Asterix and CCDC47) (PubMed:32820719, PubMed:36261522). The MPT complex associates with the SEC61 complex (PubMed:32820719, PubMed:36261522). Due to the strong similarity between NOMO1, NOMO2 and NOMO3, similar interaction pattern probably occur for the three gene copies (PubMed:20538592, PubMed:32820719).</text>
</comment>
<comment type="subcellular location">
    <subcellularLocation>
        <location evidence="3 4 7">Endoplasmic reticulum membrane</location>
        <topology evidence="1">Single-pass type I membrane protein</topology>
    </subcellularLocation>
</comment>
<comment type="alternative products">
    <event type="alternative splicing"/>
    <isoform>
        <id>Q5JPE7-1</id>
        <name>1</name>
        <sequence type="displayed"/>
    </isoform>
    <isoform>
        <id>Q5JPE7-2</id>
        <name>2</name>
        <sequence type="described" ref="VSP_013850"/>
    </isoform>
    <isoform>
        <id>Q5JPE7-3</id>
        <name>3</name>
        <sequence type="described" ref="VSP_053928 VSP_053929"/>
    </isoform>
</comment>
<comment type="tissue specificity">
    <text evidence="3">Highly expressed in pancreas and skeletal muscle and, at lower levels, in heart.</text>
</comment>
<comment type="caution">
    <text evidence="9">There are 3 copies of the NOMO gene on chromosome 16p12-p13: NOMO1 (AC Q15155), NOMO2 and NOMO3 (AC P69849). All 3 are extremely similar, which makes their individual characterization difficult. Thus, most experiments probably do not discriminate between the different members. The results reported in other entries may therefore apply for this protein.</text>
</comment>
<accession>Q5JPE7</accession>
<accession>Q4G177</accession>
<gene>
    <name type="primary">NOMO2</name>
</gene>
<keyword id="KW-0002">3D-structure</keyword>
<keyword id="KW-0025">Alternative splicing</keyword>
<keyword id="KW-0256">Endoplasmic reticulum</keyword>
<keyword id="KW-0325">Glycoprotein</keyword>
<keyword id="KW-0472">Membrane</keyword>
<keyword id="KW-1267">Proteomics identification</keyword>
<keyword id="KW-1185">Reference proteome</keyword>
<keyword id="KW-0732">Signal</keyword>
<keyword id="KW-0812">Transmembrane</keyword>
<keyword id="KW-1133">Transmembrane helix</keyword>
<proteinExistence type="evidence at protein level"/>
<protein>
    <recommendedName>
        <fullName evidence="9">BOS complex subunit NOMO2</fullName>
    </recommendedName>
    <alternativeName>
        <fullName>Nodal modulator 2</fullName>
    </alternativeName>
    <alternativeName>
        <fullName>pM5 protein 2</fullName>
    </alternativeName>
</protein>
<organism>
    <name type="scientific">Homo sapiens</name>
    <name type="common">Human</name>
    <dbReference type="NCBI Taxonomy" id="9606"/>
    <lineage>
        <taxon>Eukaryota</taxon>
        <taxon>Metazoa</taxon>
        <taxon>Chordata</taxon>
        <taxon>Craniata</taxon>
        <taxon>Vertebrata</taxon>
        <taxon>Euteleostomi</taxon>
        <taxon>Mammalia</taxon>
        <taxon>Eutheria</taxon>
        <taxon>Euarchontoglires</taxon>
        <taxon>Primates</taxon>
        <taxon>Haplorrhini</taxon>
        <taxon>Catarrhini</taxon>
        <taxon>Hominidae</taxon>
        <taxon>Homo</taxon>
    </lineage>
</organism>
<name>NOMO2_HUMAN</name>
<feature type="signal peptide" evidence="1">
    <location>
        <begin position="1"/>
        <end position="31"/>
    </location>
</feature>
<feature type="chain" id="PRO_0000021820" description="BOS complex subunit NOMO2">
    <location>
        <begin position="32"/>
        <end position="1267"/>
    </location>
</feature>
<feature type="topological domain" description="Lumenal" evidence="1">
    <location>
        <begin position="32"/>
        <end position="1155"/>
    </location>
</feature>
<feature type="transmembrane region" description="Helical" evidence="1">
    <location>
        <begin position="1156"/>
        <end position="1176"/>
    </location>
</feature>
<feature type="topological domain" description="Cytoplasmic" evidence="1">
    <location>
        <begin position="1177"/>
        <end position="1267"/>
    </location>
</feature>
<feature type="region of interest" description="Disordered" evidence="2">
    <location>
        <begin position="1198"/>
        <end position="1219"/>
    </location>
</feature>
<feature type="glycosylation site" description="N-linked (GlcNAc...) asparagine" evidence="1">
    <location>
        <position position="50"/>
    </location>
</feature>
<feature type="glycosylation site" description="N-linked (GlcNAc...) asparagine" evidence="1">
    <location>
        <position position="218"/>
    </location>
</feature>
<feature type="glycosylation site" description="N-linked (GlcNAc...) asparagine" evidence="1">
    <location>
        <position position="618"/>
    </location>
</feature>
<feature type="splice variant" id="VSP_053928" description="In isoform 3." evidence="8">
    <original>MLV</original>
    <variation>MAR</variation>
    <location>
        <begin position="1"/>
        <end position="3"/>
    </location>
</feature>
<feature type="splice variant" id="VSP_053929" description="In isoform 3." evidence="8">
    <location>
        <begin position="4"/>
        <end position="170"/>
    </location>
</feature>
<feature type="splice variant" id="VSP_013850" description="In isoform 2." evidence="8">
    <location>
        <begin position="1223"/>
        <end position="1267"/>
    </location>
</feature>
<feature type="sequence variant" id="VAR_034139" description="In dbSNP:rs1062413.">
    <original>V</original>
    <variation>M</variation>
    <location>
        <position position="493"/>
    </location>
</feature>
<feature type="sequence variant" id="VAR_016104" description="In dbSNP:rs15984.">
    <original>V</original>
    <variation>M</variation>
    <location>
        <position position="580"/>
    </location>
</feature>
<evidence type="ECO:0000255" key="1"/>
<evidence type="ECO:0000256" key="2">
    <source>
        <dbReference type="SAM" id="MobiDB-lite"/>
    </source>
</evidence>
<evidence type="ECO:0000269" key="3">
    <source>
    </source>
</evidence>
<evidence type="ECO:0000269" key="4">
    <source>
    </source>
</evidence>
<evidence type="ECO:0000269" key="5">
    <source>
    </source>
</evidence>
<evidence type="ECO:0000269" key="6">
    <source>
    </source>
</evidence>
<evidence type="ECO:0000269" key="7">
    <source>
    </source>
</evidence>
<evidence type="ECO:0000303" key="8">
    <source>
    </source>
</evidence>
<evidence type="ECO:0000305" key="9"/>
<sequence length="1267" mass="139439">MLVGQGAGLLGPAVVTAAVVLLLSGVGPAHGSEDIVVGCGGFVKSDVEINYSLIEIKLYTKHGTLKYQTDCAPNNGYFMIPLYDKGDFILKIEPPLGWSFEPTTVELHVDGVSDICTKGGDINFVFTGFSVNGKVLSKGQPLGPAGVQVSLRNTGTEAKIQSTVTQPGGKFAFFKVLPGDYEILATHPTWALKEASTTVRVTNSNANAASPLIVAGYNVSGSVRSDGEPMKGVKFLLFSSLVTKEDVLGCNVSPVPGFQPQDESLVYLCYTVSREDGSFSFYSLPSGGYTVIPFYRGERITFDVAPSRLDFTVEHDSLKIEPVFHVMGFSVTGRVLNGPEGDGVPEAVVTLNNQIKVKTKADGSFRLENITTGTYTIHAQKEHLYFETVTIKIAPNTPQLADIVATGFSVCGRISIIRFPDTVKQMNKYKVVLSSQDKDKSLVTVETDAHGSFCFKAKPGTYKVQVMVPEAETRAGLTLKPQTFPLTVTDRPVMDVAFVQFLASVSGKVSCLDTCGDLLVTLQSLSRQGEKRSLQLSGKVNAMTFTFDNVLPGKYKISIMHEDWCWKNKSLEVEVLEDDVSAVEFRQTGYMLRCSLSHAITLEFYQDGNGRENVGIYNLSKGVNRFCLSKPGVYKVTPRSCHRFEQAFYTYDTSSPSILTLTAIRHHVLGTITTDKMMDVTVTIKSSIDSEPALVLGPLKSVQELRREQQLAEIEARRQEREKNGNEEGEERMTKPPVQEMVDELQGPFSYDFSYWARSGEKITVTPSSKELLFYPPSMEAVVSGESCPGKLIEIHGKAGLFLEGQIHPELEGVEIVISEKGASSPLITVFTDDKGAYSVGPLHSDLEYTVTSQKEGYVLTAVEGTIGDFKAYALAGVSFEIKAEDDQPLPGVLLSLSGGLFRSNLLTQDNGILTFSNLSPGQYYFKPMMKEFRFEPSSQMIEVQEGQNLKITITGYRTAYSCYGTVSSLNGEPEQGVAMEAVGQNDCSIYGEDTVTDEEGKFRLRGLLPGCVYHVQLKAEGNDHIERALPHHRVIEVGNNDIDDVNIIVFRQINQFDLSGNVITSSEYLPTLWVKLYKSENLDNPIQTVSLGQSLFFHFPPLLRDGENYVVLLDSTLPRSQYDYILPQVSFTAVGYHKHITLIFNPTRKLPEQDIAQGSYIALPLTLLVLLAGYNHDKLIPLLLQLTSRLQGVGALGQAASDNSGPEDAKRQAKKQKTRRTLRLQEEFQLMWCLVPWRGTLGIHLFSSLPFASEILLETTATCIHY</sequence>
<dbReference type="EMBL" id="AL832855">
    <property type="protein sequence ID" value="CAI46162.1"/>
    <property type="molecule type" value="mRNA"/>
</dbReference>
<dbReference type="EMBL" id="AC126755">
    <property type="status" value="NOT_ANNOTATED_CDS"/>
    <property type="molecule type" value="Genomic_DNA"/>
</dbReference>
<dbReference type="EMBL" id="AC136618">
    <property type="status" value="NOT_ANNOTATED_CDS"/>
    <property type="molecule type" value="Genomic_DNA"/>
</dbReference>
<dbReference type="EMBL" id="BC028389">
    <property type="protein sequence ID" value="AAH28389.1"/>
    <property type="molecule type" value="mRNA"/>
</dbReference>
<dbReference type="EMBL" id="BC041131">
    <property type="protein sequence ID" value="AAH41131.1"/>
    <property type="molecule type" value="mRNA"/>
</dbReference>
<dbReference type="CCDS" id="CCDS10570.1">
    <molecule id="Q5JPE7-2"/>
</dbReference>
<dbReference type="CCDS" id="CCDS32394.1">
    <molecule id="Q5JPE7-1"/>
</dbReference>
<dbReference type="RefSeq" id="NP_001004060.1">
    <molecule id="Q5JPE7-1"/>
    <property type="nucleotide sequence ID" value="NM_001004060.2"/>
</dbReference>
<dbReference type="RefSeq" id="NP_775885.1">
    <molecule id="Q5JPE7-2"/>
    <property type="nucleotide sequence ID" value="NM_173614.4"/>
</dbReference>
<dbReference type="PDB" id="9C7U">
    <property type="method" value="EM"/>
    <property type="resolution" value="3.65 A"/>
    <property type="chains" value="B=1-1222"/>
</dbReference>
<dbReference type="PDB" id="9C7V">
    <property type="method" value="EM"/>
    <property type="resolution" value="6.60 A"/>
    <property type="chains" value="B=1-1267"/>
</dbReference>
<dbReference type="PDBsum" id="9C7U"/>
<dbReference type="PDBsum" id="9C7V"/>
<dbReference type="EMDB" id="EMD-45294"/>
<dbReference type="EMDB" id="EMD-45295"/>
<dbReference type="SMR" id="Q5JPE7"/>
<dbReference type="BioGRID" id="129677">
    <property type="interactions" value="49"/>
</dbReference>
<dbReference type="ComplexPortal" id="CPX-8022">
    <property type="entry name" value="BOS complex, NOMO2 variant"/>
</dbReference>
<dbReference type="FunCoup" id="Q5JPE7">
    <property type="interactions" value="539"/>
</dbReference>
<dbReference type="IntAct" id="Q5JPE7">
    <property type="interactions" value="28"/>
</dbReference>
<dbReference type="MINT" id="Q5JPE7"/>
<dbReference type="STRING" id="9606.ENSP00000477502"/>
<dbReference type="TCDB" id="8.A.146.1.1">
    <property type="family name" value="the nodal modulator (nomo) family"/>
</dbReference>
<dbReference type="GlyConnect" id="1573">
    <property type="glycosylation" value="8 N-Linked glycans (3 sites)"/>
</dbReference>
<dbReference type="GlyCosmos" id="Q5JPE7">
    <property type="glycosylation" value="4 sites, 8 glycans"/>
</dbReference>
<dbReference type="GlyGen" id="Q5JPE7">
    <property type="glycosylation" value="8 sites, 10 N-linked glycans (3 sites), 1 O-linked glycan (2 sites)"/>
</dbReference>
<dbReference type="iPTMnet" id="Q5JPE7"/>
<dbReference type="PhosphoSitePlus" id="Q5JPE7"/>
<dbReference type="SwissPalm" id="Q5JPE7"/>
<dbReference type="BioMuta" id="NOMO2"/>
<dbReference type="DMDM" id="67460998"/>
<dbReference type="jPOST" id="Q5JPE7"/>
<dbReference type="MassIVE" id="Q5JPE7"/>
<dbReference type="PaxDb" id="9606-ENSP00000477502"/>
<dbReference type="PeptideAtlas" id="Q5JPE7"/>
<dbReference type="ProteomicsDB" id="62158"/>
<dbReference type="ProteomicsDB" id="63010">
    <molecule id="Q5JPE7-1"/>
</dbReference>
<dbReference type="ProteomicsDB" id="63011">
    <molecule id="Q5JPE7-2"/>
</dbReference>
<dbReference type="Pumba" id="Q5JPE7"/>
<dbReference type="Antibodypedia" id="42898">
    <property type="antibodies" value="40 antibodies from 18 providers"/>
</dbReference>
<dbReference type="DNASU" id="283820"/>
<dbReference type="Ensembl" id="ENST00000330537.10">
    <molecule id="Q5JPE7-2"/>
    <property type="protein sequence ID" value="ENSP00000331851.6"/>
    <property type="gene ID" value="ENSG00000185164.15"/>
</dbReference>
<dbReference type="Ensembl" id="ENST00000381474.7">
    <molecule id="Q5JPE7-1"/>
    <property type="protein sequence ID" value="ENSP00000370883.3"/>
    <property type="gene ID" value="ENSG00000185164.15"/>
</dbReference>
<dbReference type="Ensembl" id="ENST00000543392.5">
    <molecule id="Q5JPE7-3"/>
    <property type="protein sequence ID" value="ENSP00000439970.1"/>
    <property type="gene ID" value="ENSG00000185164.15"/>
</dbReference>
<dbReference type="Ensembl" id="ENST00000621364.4">
    <molecule id="Q5JPE7-1"/>
    <property type="protein sequence ID" value="ENSP00000477502.1"/>
    <property type="gene ID" value="ENSG00000185164.15"/>
</dbReference>
<dbReference type="Ensembl" id="ENST00000622306.5">
    <molecule id="Q5JPE7-2"/>
    <property type="protein sequence ID" value="ENSP00000478653.1"/>
    <property type="gene ID" value="ENSG00000185164.15"/>
</dbReference>
<dbReference type="GeneID" id="283820"/>
<dbReference type="KEGG" id="hsa:283820"/>
<dbReference type="MANE-Select" id="ENST00000622306.5">
    <molecule id="Q5JPE7-2"/>
    <property type="protein sequence ID" value="ENSP00000478653.1"/>
    <property type="RefSeq nucleotide sequence ID" value="NM_173614.4"/>
    <property type="RefSeq protein sequence ID" value="NP_775885.1"/>
</dbReference>
<dbReference type="UCSC" id="uc032dtj.2">
    <molecule id="Q5JPE7-1"/>
    <property type="organism name" value="human"/>
</dbReference>
<dbReference type="AGR" id="HGNC:22652"/>
<dbReference type="CTD" id="283820"/>
<dbReference type="DisGeNET" id="283820"/>
<dbReference type="GeneCards" id="NOMO2"/>
<dbReference type="HGNC" id="HGNC:22652">
    <property type="gene designation" value="NOMO2"/>
</dbReference>
<dbReference type="HPA" id="ENSG00000185164">
    <property type="expression patterns" value="Low tissue specificity"/>
</dbReference>
<dbReference type="MIM" id="609158">
    <property type="type" value="gene"/>
</dbReference>
<dbReference type="neXtProt" id="NX_Q5JPE7"/>
<dbReference type="PharmGKB" id="PA134958124"/>
<dbReference type="VEuPathDB" id="HostDB:ENSG00000185164"/>
<dbReference type="eggNOG" id="KOG1948">
    <property type="taxonomic scope" value="Eukaryota"/>
</dbReference>
<dbReference type="GeneTree" id="ENSGT00390000000089"/>
<dbReference type="HOGENOM" id="CLU_007543_2_0_1"/>
<dbReference type="InParanoid" id="Q5JPE7"/>
<dbReference type="OMA" id="NQYTIHA"/>
<dbReference type="OrthoDB" id="5766at9604"/>
<dbReference type="PAN-GO" id="Q5JPE7">
    <property type="GO annotations" value="1 GO annotation based on evolutionary models"/>
</dbReference>
<dbReference type="PhylomeDB" id="Q5JPE7"/>
<dbReference type="TreeFam" id="TF313696"/>
<dbReference type="PathwayCommons" id="Q5JPE7"/>
<dbReference type="SignaLink" id="Q5JPE7"/>
<dbReference type="BioGRID-ORCS" id="283820">
    <property type="hits" value="23 hits in 1003 CRISPR screens"/>
</dbReference>
<dbReference type="CD-CODE" id="FB4E32DD">
    <property type="entry name" value="Presynaptic clusters and postsynaptic densities"/>
</dbReference>
<dbReference type="ChiTaRS" id="NOMO2">
    <property type="organism name" value="human"/>
</dbReference>
<dbReference type="GenomeRNAi" id="283820"/>
<dbReference type="Pharos" id="Q5JPE7">
    <property type="development level" value="Tdark"/>
</dbReference>
<dbReference type="PRO" id="PR:Q5JPE7"/>
<dbReference type="Proteomes" id="UP000005640">
    <property type="component" value="Chromosome 16"/>
</dbReference>
<dbReference type="RNAct" id="Q5JPE7">
    <property type="molecule type" value="protein"/>
</dbReference>
<dbReference type="Bgee" id="ENSG00000185164">
    <property type="expression patterns" value="Expressed in body of pancreas and 97 other cell types or tissues"/>
</dbReference>
<dbReference type="ExpressionAtlas" id="Q5JPE7">
    <property type="expression patterns" value="baseline and differential"/>
</dbReference>
<dbReference type="GO" id="GO:0005789">
    <property type="term" value="C:endoplasmic reticulum membrane"/>
    <property type="evidence" value="ECO:0000314"/>
    <property type="project" value="UniProtKB"/>
</dbReference>
<dbReference type="GO" id="GO:0160064">
    <property type="term" value="C:multi-pass translocon complex"/>
    <property type="evidence" value="ECO:0000314"/>
    <property type="project" value="UniProtKB"/>
</dbReference>
<dbReference type="GO" id="GO:0032991">
    <property type="term" value="C:protein-containing complex"/>
    <property type="evidence" value="ECO:0000314"/>
    <property type="project" value="UniProtKB"/>
</dbReference>
<dbReference type="GO" id="GO:0030246">
    <property type="term" value="F:carbohydrate binding"/>
    <property type="evidence" value="ECO:0007669"/>
    <property type="project" value="InterPro"/>
</dbReference>
<dbReference type="GO" id="GO:0043022">
    <property type="term" value="F:ribosome binding"/>
    <property type="evidence" value="ECO:0000314"/>
    <property type="project" value="UniProtKB"/>
</dbReference>
<dbReference type="GO" id="GO:0160063">
    <property type="term" value="P:multi-pass transmembrane protein insertion into ER membrane"/>
    <property type="evidence" value="ECO:0000314"/>
    <property type="project" value="UniProtKB"/>
</dbReference>
<dbReference type="FunFam" id="2.60.40.1120:FF:000001">
    <property type="entry name" value="Nodal modulator 1"/>
    <property type="match status" value="1"/>
</dbReference>
<dbReference type="Gene3D" id="2.60.40.1120">
    <property type="entry name" value="Carboxypeptidase-like, regulatory domain"/>
    <property type="match status" value="1"/>
</dbReference>
<dbReference type="Gene3D" id="2.60.40.10">
    <property type="entry name" value="Immunoglobulins"/>
    <property type="match status" value="1"/>
</dbReference>
<dbReference type="InterPro" id="IPR013784">
    <property type="entry name" value="Carb-bd-like_fold"/>
</dbReference>
<dbReference type="InterPro" id="IPR008969">
    <property type="entry name" value="CarboxyPept-like_regulatory"/>
</dbReference>
<dbReference type="InterPro" id="IPR013783">
    <property type="entry name" value="Ig-like_fold"/>
</dbReference>
<dbReference type="InterPro" id="IPR055075">
    <property type="entry name" value="NOMO-like_N"/>
</dbReference>
<dbReference type="InterPro" id="IPR055074">
    <property type="entry name" value="NOMO1-3_2nd"/>
</dbReference>
<dbReference type="InterPro" id="IPR055073">
    <property type="entry name" value="NOMO1-like_9th"/>
</dbReference>
<dbReference type="InterPro" id="IPR056191">
    <property type="entry name" value="NOMO_12th"/>
</dbReference>
<dbReference type="InterPro" id="IPR056189">
    <property type="entry name" value="NOMO_3rd"/>
</dbReference>
<dbReference type="InterPro" id="IPR056190">
    <property type="entry name" value="NOMO_5th"/>
</dbReference>
<dbReference type="InterPro" id="IPR056188">
    <property type="entry name" value="NOMO_6th"/>
</dbReference>
<dbReference type="InterPro" id="IPR056319">
    <property type="entry name" value="NOMO_7th"/>
</dbReference>
<dbReference type="InterPro" id="IPR056187">
    <property type="entry name" value="NOMO_8th"/>
</dbReference>
<dbReference type="InterPro" id="IPR051417">
    <property type="entry name" value="SDr/BOS_complex"/>
</dbReference>
<dbReference type="InterPro" id="IPR041033">
    <property type="entry name" value="SpaA_PFL_dom_1"/>
</dbReference>
<dbReference type="PANTHER" id="PTHR23303:SF14">
    <property type="entry name" value="BOS COMPLEX SUBUNIT NOMO1-RELATED"/>
    <property type="match status" value="1"/>
</dbReference>
<dbReference type="PANTHER" id="PTHR23303">
    <property type="entry name" value="CARBOXYPEPTIDASE REGULATORY REGION-CONTAINING"/>
    <property type="match status" value="1"/>
</dbReference>
<dbReference type="Pfam" id="PF13620">
    <property type="entry name" value="CarboxypepD_reg"/>
    <property type="match status" value="1"/>
</dbReference>
<dbReference type="Pfam" id="PF23141">
    <property type="entry name" value="Ig_NOMO"/>
    <property type="match status" value="1"/>
</dbReference>
<dbReference type="Pfam" id="PF22898">
    <property type="entry name" value="NOMO1-like_1st"/>
    <property type="match status" value="1"/>
</dbReference>
<dbReference type="Pfam" id="PF22904">
    <property type="entry name" value="NOMO1-like_2nd"/>
    <property type="match status" value="1"/>
</dbReference>
<dbReference type="Pfam" id="PF22902">
    <property type="entry name" value="NOMO1-like_9th"/>
    <property type="match status" value="1"/>
</dbReference>
<dbReference type="Pfam" id="PF23192">
    <property type="entry name" value="NOMO_12th"/>
    <property type="match status" value="1"/>
</dbReference>
<dbReference type="Pfam" id="PF23193">
    <property type="entry name" value="NOMO_3rd"/>
    <property type="match status" value="1"/>
</dbReference>
<dbReference type="Pfam" id="PF23194">
    <property type="entry name" value="NOMO_5th"/>
    <property type="match status" value="1"/>
</dbReference>
<dbReference type="Pfam" id="PF23196">
    <property type="entry name" value="NOMO_6th"/>
    <property type="match status" value="1"/>
</dbReference>
<dbReference type="Pfam" id="PF23660">
    <property type="entry name" value="NOMO_8th"/>
    <property type="match status" value="1"/>
</dbReference>
<dbReference type="Pfam" id="PF17802">
    <property type="entry name" value="SpaA"/>
    <property type="match status" value="1"/>
</dbReference>
<dbReference type="SUPFAM" id="SSF49464">
    <property type="entry name" value="Carboxypeptidase regulatory domain-like"/>
    <property type="match status" value="1"/>
</dbReference>
<dbReference type="SUPFAM" id="SSF49452">
    <property type="entry name" value="Starch-binding domain-like"/>
    <property type="match status" value="3"/>
</dbReference>
<reference key="1">
    <citation type="journal article" date="2007" name="BMC Genomics">
        <title>The full-ORF clone resource of the German cDNA consortium.</title>
        <authorList>
            <person name="Bechtel S."/>
            <person name="Rosenfelder H."/>
            <person name="Duda A."/>
            <person name="Schmidt C.P."/>
            <person name="Ernst U."/>
            <person name="Wellenreuther R."/>
            <person name="Mehrle A."/>
            <person name="Schuster C."/>
            <person name="Bahr A."/>
            <person name="Bloecker H."/>
            <person name="Heubner D."/>
            <person name="Hoerlein A."/>
            <person name="Michel G."/>
            <person name="Wedler H."/>
            <person name="Koehrer K."/>
            <person name="Ottenwaelder B."/>
            <person name="Poustka A."/>
            <person name="Wiemann S."/>
            <person name="Schupp I."/>
        </authorList>
    </citation>
    <scope>NUCLEOTIDE SEQUENCE [LARGE SCALE MRNA] (ISOFORM 1)</scope>
    <source>
        <tissue>Lymph node</tissue>
    </source>
</reference>
<reference key="2">
    <citation type="journal article" date="2004" name="Nature">
        <title>The sequence and analysis of duplication-rich human chromosome 16.</title>
        <authorList>
            <person name="Martin J."/>
            <person name="Han C."/>
            <person name="Gordon L.A."/>
            <person name="Terry A."/>
            <person name="Prabhakar S."/>
            <person name="She X."/>
            <person name="Xie G."/>
            <person name="Hellsten U."/>
            <person name="Chan Y.M."/>
            <person name="Altherr M."/>
            <person name="Couronne O."/>
            <person name="Aerts A."/>
            <person name="Bajorek E."/>
            <person name="Black S."/>
            <person name="Blumer H."/>
            <person name="Branscomb E."/>
            <person name="Brown N.C."/>
            <person name="Bruno W.J."/>
            <person name="Buckingham J.M."/>
            <person name="Callen D.F."/>
            <person name="Campbell C.S."/>
            <person name="Campbell M.L."/>
            <person name="Campbell E.W."/>
            <person name="Caoile C."/>
            <person name="Challacombe J.F."/>
            <person name="Chasteen L.A."/>
            <person name="Chertkov O."/>
            <person name="Chi H.C."/>
            <person name="Christensen M."/>
            <person name="Clark L.M."/>
            <person name="Cohn J.D."/>
            <person name="Denys M."/>
            <person name="Detter J.C."/>
            <person name="Dickson M."/>
            <person name="Dimitrijevic-Bussod M."/>
            <person name="Escobar J."/>
            <person name="Fawcett J.J."/>
            <person name="Flowers D."/>
            <person name="Fotopulos D."/>
            <person name="Glavina T."/>
            <person name="Gomez M."/>
            <person name="Gonzales E."/>
            <person name="Goodstein D."/>
            <person name="Goodwin L.A."/>
            <person name="Grady D.L."/>
            <person name="Grigoriev I."/>
            <person name="Groza M."/>
            <person name="Hammon N."/>
            <person name="Hawkins T."/>
            <person name="Haydu L."/>
            <person name="Hildebrand C.E."/>
            <person name="Huang W."/>
            <person name="Israni S."/>
            <person name="Jett J."/>
            <person name="Jewett P.B."/>
            <person name="Kadner K."/>
            <person name="Kimball H."/>
            <person name="Kobayashi A."/>
            <person name="Krawczyk M.-C."/>
            <person name="Leyba T."/>
            <person name="Longmire J.L."/>
            <person name="Lopez F."/>
            <person name="Lou Y."/>
            <person name="Lowry S."/>
            <person name="Ludeman T."/>
            <person name="Manohar C.F."/>
            <person name="Mark G.A."/>
            <person name="McMurray K.L."/>
            <person name="Meincke L.J."/>
            <person name="Morgan J."/>
            <person name="Moyzis R.K."/>
            <person name="Mundt M.O."/>
            <person name="Munk A.C."/>
            <person name="Nandkeshwar R.D."/>
            <person name="Pitluck S."/>
            <person name="Pollard M."/>
            <person name="Predki P."/>
            <person name="Parson-Quintana B."/>
            <person name="Ramirez L."/>
            <person name="Rash S."/>
            <person name="Retterer J."/>
            <person name="Ricke D.O."/>
            <person name="Robinson D.L."/>
            <person name="Rodriguez A."/>
            <person name="Salamov A."/>
            <person name="Saunders E.H."/>
            <person name="Scott D."/>
            <person name="Shough T."/>
            <person name="Stallings R.L."/>
            <person name="Stalvey M."/>
            <person name="Sutherland R.D."/>
            <person name="Tapia R."/>
            <person name="Tesmer J.G."/>
            <person name="Thayer N."/>
            <person name="Thompson L.S."/>
            <person name="Tice H."/>
            <person name="Torney D.C."/>
            <person name="Tran-Gyamfi M."/>
            <person name="Tsai M."/>
            <person name="Ulanovsky L.E."/>
            <person name="Ustaszewska A."/>
            <person name="Vo N."/>
            <person name="White P.S."/>
            <person name="Williams A.L."/>
            <person name="Wills P.L."/>
            <person name="Wu J.-R."/>
            <person name="Wu K."/>
            <person name="Yang J."/>
            <person name="DeJong P."/>
            <person name="Bruce D."/>
            <person name="Doggett N.A."/>
            <person name="Deaven L."/>
            <person name="Schmutz J."/>
            <person name="Grimwood J."/>
            <person name="Richardson P."/>
            <person name="Rokhsar D.S."/>
            <person name="Eichler E.E."/>
            <person name="Gilna P."/>
            <person name="Lucas S.M."/>
            <person name="Myers R.M."/>
            <person name="Rubin E.M."/>
            <person name="Pennacchio L.A."/>
        </authorList>
    </citation>
    <scope>NUCLEOTIDE SEQUENCE [LARGE SCALE GENOMIC DNA]</scope>
</reference>
<reference key="3">
    <citation type="journal article" date="2004" name="Genome Res.">
        <title>The status, quality, and expansion of the NIH full-length cDNA project: the Mammalian Gene Collection (MGC).</title>
        <authorList>
            <consortium name="The MGC Project Team"/>
        </authorList>
    </citation>
    <scope>NUCLEOTIDE SEQUENCE [LARGE SCALE MRNA] (ISOFORMS 2 AND 3)</scope>
    <source>
        <tissue>Leukocyte</tissue>
        <tissue>Testis</tissue>
    </source>
</reference>
<reference key="4">
    <citation type="journal article" date="2004" name="EMBO J.">
        <title>Nicalin and its binding partner Nomo are novel Nodal signaling antagonists.</title>
        <authorList>
            <person name="Haffner C."/>
            <person name="Frauli M."/>
            <person name="Topp S."/>
            <person name="Irmler M."/>
            <person name="Hofmann K."/>
            <person name="Regula J.T."/>
            <person name="Bally-Cuif L."/>
            <person name="Haass C."/>
        </authorList>
    </citation>
    <scope>INTERACTION WITH NCLN</scope>
    <scope>SUBCELLULAR LOCATION</scope>
    <scope>TISSUE SPECIFICITY</scope>
</reference>
<reference key="5">
    <citation type="journal article" date="2007" name="J. Biol. Chem.">
        <title>The Nicastrin-like protein Nicalin regulates assembly and stability of the Nicalin-nodal modulator (NOMO) membrane protein complex.</title>
        <authorList>
            <person name="Haffner C."/>
            <person name="Dettmer U."/>
            <person name="Weiler T."/>
            <person name="Haass C."/>
        </authorList>
    </citation>
    <scope>INTERACTION WITH NCLN</scope>
    <scope>SUBCELLULAR LOCATION</scope>
</reference>
<reference key="6">
    <citation type="journal article" date="2010" name="J. Biol. Chem.">
        <title>Transmembrane protein 147 (TMEM147) is a novel component of the Nicalin-NOMO protein complex.</title>
        <authorList>
            <person name="Dettmer U."/>
            <person name="Kuhn P.H."/>
            <person name="Abou-Ajram C."/>
            <person name="Lichtenthaler S.F."/>
            <person name="Kruger M."/>
            <person name="Kremmer E."/>
            <person name="Haass C."/>
            <person name="Haffner C."/>
        </authorList>
    </citation>
    <scope>INTERACTION WITH NCLN AND TMEM147</scope>
</reference>
<reference key="7">
    <citation type="journal article" date="2020" name="Elife">
        <title>An ER translocon for multi-pass membrane protein biogenesis.</title>
        <authorList>
            <person name="McGilvray P.T."/>
            <person name="Anghel S.A."/>
            <person name="Sundaram A."/>
            <person name="Zhong F."/>
            <person name="Trnka M.J."/>
            <person name="Fuller J.R."/>
            <person name="Hu H."/>
            <person name="Burlingame A.L."/>
            <person name="Keenan R.J."/>
        </authorList>
    </citation>
    <scope>FUNCTION</scope>
    <scope>INTERACTION WITH TMCO1; CCDC47; NCLN; TMEM147; SEC61A1; SEC61B AND SEC61G</scope>
</reference>
<reference key="8">
    <citation type="journal article" date="2022" name="Nature">
        <title>Substrate-driven assembly of a translocon for multipass membrane proteins.</title>
        <authorList>
            <person name="Sundaram A."/>
            <person name="Yamsek M."/>
            <person name="Zhong F."/>
            <person name="Hooda Y."/>
            <person name="Hegde R.S."/>
            <person name="Keenan R.J."/>
        </authorList>
    </citation>
    <scope>FUNCTION</scope>
    <scope>IDENTIFICATION IN THE MULTI-PASS TRANSLOCON COMPLEX</scope>
    <scope>SUBCELLULAR LOCATION</scope>
</reference>